<accession>C5BSQ5</accession>
<feature type="chain" id="PRO_1000205728" description="Large ribosomal subunit protein bL20">
    <location>
        <begin position="1"/>
        <end position="119"/>
    </location>
</feature>
<reference key="1">
    <citation type="journal article" date="2009" name="PLoS ONE">
        <title>The complete genome of Teredinibacter turnerae T7901: an intracellular endosymbiont of marine wood-boring bivalves (shipworms).</title>
        <authorList>
            <person name="Yang J.C."/>
            <person name="Madupu R."/>
            <person name="Durkin A.S."/>
            <person name="Ekborg N.A."/>
            <person name="Pedamallu C.S."/>
            <person name="Hostetler J.B."/>
            <person name="Radune D."/>
            <person name="Toms B.S."/>
            <person name="Henrissat B."/>
            <person name="Coutinho P.M."/>
            <person name="Schwarz S."/>
            <person name="Field L."/>
            <person name="Trindade-Silva A.E."/>
            <person name="Soares C.A.G."/>
            <person name="Elshahawi S."/>
            <person name="Hanora A."/>
            <person name="Schmidt E.W."/>
            <person name="Haygood M.G."/>
            <person name="Posfai J."/>
            <person name="Benner J."/>
            <person name="Madinger C."/>
            <person name="Nove J."/>
            <person name="Anton B."/>
            <person name="Chaudhary K."/>
            <person name="Foster J."/>
            <person name="Holman A."/>
            <person name="Kumar S."/>
            <person name="Lessard P.A."/>
            <person name="Luyten Y.A."/>
            <person name="Slatko B."/>
            <person name="Wood N."/>
            <person name="Wu B."/>
            <person name="Teplitski M."/>
            <person name="Mougous J.D."/>
            <person name="Ward N."/>
            <person name="Eisen J.A."/>
            <person name="Badger J.H."/>
            <person name="Distel D.L."/>
        </authorList>
    </citation>
    <scope>NUCLEOTIDE SEQUENCE [LARGE SCALE GENOMIC DNA]</scope>
    <source>
        <strain>ATCC 39867 / T7901</strain>
    </source>
</reference>
<gene>
    <name evidence="1" type="primary">rplT</name>
    <name type="ordered locus">TERTU_1458</name>
</gene>
<evidence type="ECO:0000255" key="1">
    <source>
        <dbReference type="HAMAP-Rule" id="MF_00382"/>
    </source>
</evidence>
<evidence type="ECO:0000305" key="2"/>
<sequence>MARVKRGVVARRSHKKVLKAAKGYYGARSRVFRVAKQAVIKAGQYAYRDRRNKKRNFRALWITRINAQSRAEGMSYSRLIAGLKKAEITLDRRVLADLAIHDKPAFAAIVAKAKDALAA</sequence>
<organism>
    <name type="scientific">Teredinibacter turnerae (strain ATCC 39867 / T7901)</name>
    <dbReference type="NCBI Taxonomy" id="377629"/>
    <lineage>
        <taxon>Bacteria</taxon>
        <taxon>Pseudomonadati</taxon>
        <taxon>Pseudomonadota</taxon>
        <taxon>Gammaproteobacteria</taxon>
        <taxon>Cellvibrionales</taxon>
        <taxon>Cellvibrionaceae</taxon>
        <taxon>Teredinibacter</taxon>
    </lineage>
</organism>
<comment type="function">
    <text evidence="1">Binds directly to 23S ribosomal RNA and is necessary for the in vitro assembly process of the 50S ribosomal subunit. It is not involved in the protein synthesizing functions of that subunit.</text>
</comment>
<comment type="similarity">
    <text evidence="1">Belongs to the bacterial ribosomal protein bL20 family.</text>
</comment>
<dbReference type="EMBL" id="CP001614">
    <property type="protein sequence ID" value="ACR11978.1"/>
    <property type="molecule type" value="Genomic_DNA"/>
</dbReference>
<dbReference type="RefSeq" id="WP_015818090.1">
    <property type="nucleotide sequence ID" value="NC_012997.1"/>
</dbReference>
<dbReference type="SMR" id="C5BSQ5"/>
<dbReference type="STRING" id="377629.TERTU_1458"/>
<dbReference type="GeneID" id="58409152"/>
<dbReference type="GeneID" id="93857251"/>
<dbReference type="KEGG" id="ttu:TERTU_1458"/>
<dbReference type="eggNOG" id="COG0292">
    <property type="taxonomic scope" value="Bacteria"/>
</dbReference>
<dbReference type="HOGENOM" id="CLU_123265_0_1_6"/>
<dbReference type="OrthoDB" id="9808966at2"/>
<dbReference type="Proteomes" id="UP000009080">
    <property type="component" value="Chromosome"/>
</dbReference>
<dbReference type="GO" id="GO:1990904">
    <property type="term" value="C:ribonucleoprotein complex"/>
    <property type="evidence" value="ECO:0007669"/>
    <property type="project" value="UniProtKB-KW"/>
</dbReference>
<dbReference type="GO" id="GO:0005840">
    <property type="term" value="C:ribosome"/>
    <property type="evidence" value="ECO:0007669"/>
    <property type="project" value="UniProtKB-KW"/>
</dbReference>
<dbReference type="GO" id="GO:0019843">
    <property type="term" value="F:rRNA binding"/>
    <property type="evidence" value="ECO:0007669"/>
    <property type="project" value="UniProtKB-UniRule"/>
</dbReference>
<dbReference type="GO" id="GO:0003735">
    <property type="term" value="F:structural constituent of ribosome"/>
    <property type="evidence" value="ECO:0007669"/>
    <property type="project" value="InterPro"/>
</dbReference>
<dbReference type="GO" id="GO:0000027">
    <property type="term" value="P:ribosomal large subunit assembly"/>
    <property type="evidence" value="ECO:0007669"/>
    <property type="project" value="UniProtKB-UniRule"/>
</dbReference>
<dbReference type="GO" id="GO:0006412">
    <property type="term" value="P:translation"/>
    <property type="evidence" value="ECO:0007669"/>
    <property type="project" value="InterPro"/>
</dbReference>
<dbReference type="CDD" id="cd07026">
    <property type="entry name" value="Ribosomal_L20"/>
    <property type="match status" value="1"/>
</dbReference>
<dbReference type="FunFam" id="1.10.1900.20:FF:000001">
    <property type="entry name" value="50S ribosomal protein L20"/>
    <property type="match status" value="1"/>
</dbReference>
<dbReference type="Gene3D" id="6.10.160.10">
    <property type="match status" value="1"/>
</dbReference>
<dbReference type="Gene3D" id="1.10.1900.20">
    <property type="entry name" value="Ribosomal protein L20"/>
    <property type="match status" value="1"/>
</dbReference>
<dbReference type="HAMAP" id="MF_00382">
    <property type="entry name" value="Ribosomal_bL20"/>
    <property type="match status" value="1"/>
</dbReference>
<dbReference type="InterPro" id="IPR005813">
    <property type="entry name" value="Ribosomal_bL20"/>
</dbReference>
<dbReference type="InterPro" id="IPR049946">
    <property type="entry name" value="RIBOSOMAL_L20_CS"/>
</dbReference>
<dbReference type="InterPro" id="IPR035566">
    <property type="entry name" value="Ribosomal_protein_bL20_C"/>
</dbReference>
<dbReference type="NCBIfam" id="TIGR01032">
    <property type="entry name" value="rplT_bact"/>
    <property type="match status" value="1"/>
</dbReference>
<dbReference type="PANTHER" id="PTHR10986">
    <property type="entry name" value="39S RIBOSOMAL PROTEIN L20"/>
    <property type="match status" value="1"/>
</dbReference>
<dbReference type="Pfam" id="PF00453">
    <property type="entry name" value="Ribosomal_L20"/>
    <property type="match status" value="1"/>
</dbReference>
<dbReference type="PRINTS" id="PR00062">
    <property type="entry name" value="RIBOSOMALL20"/>
</dbReference>
<dbReference type="SUPFAM" id="SSF74731">
    <property type="entry name" value="Ribosomal protein L20"/>
    <property type="match status" value="1"/>
</dbReference>
<dbReference type="PROSITE" id="PS00937">
    <property type="entry name" value="RIBOSOMAL_L20"/>
    <property type="match status" value="1"/>
</dbReference>
<proteinExistence type="inferred from homology"/>
<protein>
    <recommendedName>
        <fullName evidence="1">Large ribosomal subunit protein bL20</fullName>
    </recommendedName>
    <alternativeName>
        <fullName evidence="2">50S ribosomal protein L20</fullName>
    </alternativeName>
</protein>
<name>RL20_TERTT</name>
<keyword id="KW-1185">Reference proteome</keyword>
<keyword id="KW-0687">Ribonucleoprotein</keyword>
<keyword id="KW-0689">Ribosomal protein</keyword>
<keyword id="KW-0694">RNA-binding</keyword>
<keyword id="KW-0699">rRNA-binding</keyword>